<evidence type="ECO:0000250" key="1">
    <source>
        <dbReference type="UniProtKB" id="O36307"/>
    </source>
</evidence>
<evidence type="ECO:0000250" key="2">
    <source>
        <dbReference type="UniProtKB" id="P05133"/>
    </source>
</evidence>
<evidence type="ECO:0000250" key="3">
    <source>
        <dbReference type="UniProtKB" id="Q88918"/>
    </source>
</evidence>
<evidence type="ECO:0000250" key="4">
    <source>
        <dbReference type="UniProtKB" id="Q89462"/>
    </source>
</evidence>
<evidence type="ECO:0000255" key="5"/>
<evidence type="ECO:0000256" key="6">
    <source>
        <dbReference type="SAM" id="MobiDB-lite"/>
    </source>
</evidence>
<evidence type="ECO:0000269" key="7">
    <source>
    </source>
</evidence>
<evidence type="ECO:0000269" key="8">
    <source>
    </source>
</evidence>
<evidence type="ECO:0000269" key="9">
    <source>
    </source>
</evidence>
<evidence type="ECO:0000305" key="10"/>
<organismHost>
    <name type="scientific">Homo sapiens</name>
    <name type="common">Human</name>
    <dbReference type="NCBI Taxonomy" id="9606"/>
</organismHost>
<organismHost>
    <name type="scientific">Myodes glareolus</name>
    <name type="common">Bank vole</name>
    <name type="synonym">Clethrionomys glareolus</name>
    <dbReference type="NCBI Taxonomy" id="447135"/>
</organismHost>
<reference key="1">
    <citation type="journal article" date="1992" name="J. Gen. Virol.">
        <title>Cloning and sequencing of Puumala virus Sotkamo strain S and M RNA segments: evidence for strain variation in hantaviruses and expression of the nucleocapsid protein.</title>
        <authorList>
            <person name="Vapalahti O.P."/>
            <person name="Kallio-Kokko H."/>
            <person name="Salonen E.M."/>
            <person name="Brummer-Korvenkontio M."/>
            <person name="Vaheri A."/>
        </authorList>
    </citation>
    <scope>NUCLEOTIDE SEQUENCE [GENOMIC RNA]</scope>
</reference>
<reference key="2">
    <citation type="journal article" date="2012" name="Virus Genes">
        <title>Resequencing of the Puumala virus strain Sotkamo from the WHO Arbovirus collection.</title>
        <authorList>
            <person name="Kurolt I.C."/>
            <person name="Paessler S."/>
            <person name="Markotic A."/>
        </authorList>
    </citation>
    <scope>NUCLEOTIDE SEQUENCE [GENOMIC RNA]</scope>
    <source>
        <strain>Isolate Sotkamo 2009/WHO Arbovirus collection</strain>
    </source>
</reference>
<reference key="3">
    <citation type="journal article" date="2001" name="J. Virol.">
        <title>Hantavirus nucleocapsid protein is expressed as a membrane-associated protein in the perinuclear region.</title>
        <authorList>
            <person name="Ravkov E.V."/>
            <person name="Compans R.W."/>
        </authorList>
    </citation>
    <scope>SUBCELLULAR LOCATION</scope>
</reference>
<reference key="4">
    <citation type="journal article" date="2002" name="J. Gen. Virol.">
        <title>Hantavirus nucleocapsid protein interacts with the Fas-mediated apoptosis enhancer Daxx.</title>
        <authorList>
            <person name="Li X.D."/>
            <person name="Maekelae T.P."/>
            <person name="Guo D."/>
            <person name="Soliymani R."/>
            <person name="Koistinen V."/>
            <person name="Vapalahti O."/>
            <person name="Vaheri A."/>
            <person name="Lankinen H."/>
        </authorList>
    </citation>
    <scope>INTERACTION WITH HOST DAXX</scope>
</reference>
<reference key="5">
    <citation type="journal article" date="2010" name="J. Gen. Virol.">
        <title>Cytoplasmic tails of hantavirus glycoproteins interact with the nucleocapsid protein.</title>
        <authorList>
            <person name="Hepojoki J."/>
            <person name="Strandin T."/>
            <person name="Wang H."/>
            <person name="Vapalahti O."/>
            <person name="Vaheri A."/>
            <person name="Lankinen H."/>
        </authorList>
    </citation>
    <scope>INTERACTION WITH THE GLYCOPROTEIN N</scope>
    <scope>INTERACTION WITH THE GLYCOPROTEIN C</scope>
</reference>
<gene>
    <name type="primary">N</name>
</gene>
<comment type="function">
    <text evidence="1 2 4 10">Encapsidates the genome protecting it from nucleases (Probable). The encapsidated genomic RNA is termed the nucleocapsid (NC) and serves as template for transcription and replication (Probable). The nucleocapsid has a left-handed helical structure (By similarity). As a trimer, specifically binds and acts as a chaperone to unwind the panhandle structure formed by the viral RNA (vRNA) termini (By similarity). Involved in the transcription and replication initiation of vRNA by mediating primer annealing (By similarity). Plays a role in cap snatching by sequestering capped RNAs in P bodies for use by the viral RdRp during transcription initiation (By similarity). Substitutes for the cellular cap-binding complex (eIF4F) to preferentially facilitate the translation of capped mRNAs (By similarity). Initiates the translation by specifically binding to the cap and 40S ribosomal subunit (By similarity). Prevents the viral glycoprotein N (Gn) from autophagy-dependent breakdown maybe by blocking autophagosome formation (By similarity). Inhibits host EIF2AK2/PKR dimerization to prevent PKR-induced translational shutdown in cells and thus the activation of the antiviral state (By similarity). Also displays sequence-unspecific DNA endonuclease activity (By similarity).</text>
</comment>
<comment type="subunit">
    <text evidence="2 3 4 8 9">Homotrimer (By similarity). Homomultimer (By similarity). Homomultimerizes and binds to viral genomic RNA to form the nucleocapsid (By similarity). Interacts with host MAP1LC3B; this interaction participates to the protection of Gn from virus-triggered autophagy (By similarity). Interacts with host SNAP29; this interaction participates to the protection of glycoprotein N from virus-triggered autophagy (By similarity). Interacts (via N-terminus) with host RPS19; this interaction probably mediates the loading of the 40S ribosomal subunit on viral capped mRNA during N-mediated translation initiation (By similarity). Interacts with the viral RdRp (By similarity). Interacts with host SUMO1 (via N-terminus) (By similarity). Interacts with host DAXX (PubMed:11907324). Interacts (via C-terminus) with the viral glycoprotein N (PubMed:20444994). Interacts (via C-terminus) with the viral glycoprotein C (PubMed:20444994).</text>
</comment>
<comment type="subcellular location">
    <subcellularLocation>
        <location evidence="2">Virion</location>
    </subcellularLocation>
    <subcellularLocation>
        <location evidence="7">Host cytoplasm</location>
        <location evidence="7">Host perinuclear region</location>
    </subcellularLocation>
    <subcellularLocation>
        <location evidence="2">Host Golgi apparatus</location>
        <location evidence="2">Host cis-Golgi network</location>
    </subcellularLocation>
    <text evidence="2">Internal protein of virus particle.</text>
</comment>
<comment type="domain">
    <text evidence="2 4">The N-terminus is required for chaperone activity and, in trimeric form, this region likely serves in high affinity vRNA panhandle recognition (By similarity). The N-terminus also contains a coiled coil region, which probably participates in but is insufficient to initiate N trimerization (By similarity). The YxxL motif is indispensable for the interaction with host MAP1LC3B (By similarity). The central region is involved in specific RNA-binding (By similarity). Has distinct cap- and RNA-binding sites so it can bind simultaneously both the vRNA and mRNA cap (By similarity).</text>
</comment>
<comment type="similarity">
    <text evidence="10">Belongs to the hantavirus nucleocapsid protein family.</text>
</comment>
<accession>P27313</accession>
<accession>I4EPA2</accession>
<organism>
    <name type="scientific">Puumala virus (strain Sotkamo/V-2969/81)</name>
    <dbReference type="NCBI Taxonomy" id="39002"/>
    <lineage>
        <taxon>Viruses</taxon>
        <taxon>Riboviria</taxon>
        <taxon>Orthornavirae</taxon>
        <taxon>Negarnaviricota</taxon>
        <taxon>Polyploviricotina</taxon>
        <taxon>Ellioviricetes</taxon>
        <taxon>Bunyavirales</taxon>
        <taxon>Hantaviridae</taxon>
        <taxon>Mammantavirinae</taxon>
        <taxon>Orthohantavirus</taxon>
        <taxon>Orthohantavirus puumalaense</taxon>
    </lineage>
</organism>
<protein>
    <recommendedName>
        <fullName>Nucleoprotein</fullName>
        <ecNumber evidence="4">3.1.-.-</ecNumber>
    </recommendedName>
    <alternativeName>
        <fullName>Nucleocapsid protein</fullName>
        <shortName>Protein N</shortName>
    </alternativeName>
</protein>
<sequence>MSDLTDIQEDITRHEQQLIVARQKLKDAERAVEVDPDDVNKNTLQARQQTVSALEDKLADYKRRMADAVSRKKMDTKPTDPTGIEPDDHLKERSSLRYGNVLDVNAIDIEEPSGQTADWYTIGVYVIGFTLPIILKALYMLSTRGRQTVKENKGTRIRFKDDTSFEDINGIRRPKHLYVSMPTAQSTMKAEELTPGRFRTIVCGLFPTQIQVRNIMSPVMGVIGFSFFVKDWSERIREFMEKECPFIKPEVKPGTPAQEIEMLKRNKIYFMQRQDVLDKNHVADIDKLIDYAASGDPTSPDNIDSPNAPWVFACAPDRCPPTCIYVAGMAELGAFFSILQDMRNTIMASKTVGTAEEKLKKKSSFYQSYLRRTQSMGIQLDQRIILLFMLEWGKEMVDHFHLGDDMDPELRGLAQALIDQKVKEISNQEPLKI</sequence>
<keyword id="KW-0167">Capsid protein</keyword>
<keyword id="KW-0143">Chaperone</keyword>
<keyword id="KW-0175">Coiled coil</keyword>
<keyword id="KW-0255">Endonuclease</keyword>
<keyword id="KW-1139">Helical capsid protein</keyword>
<keyword id="KW-1035">Host cytoplasm</keyword>
<keyword id="KW-1040">Host Golgi apparatus</keyword>
<keyword id="KW-0378">Hydrolase</keyword>
<keyword id="KW-0540">Nuclease</keyword>
<keyword id="KW-1185">Reference proteome</keyword>
<keyword id="KW-0687">Ribonucleoprotein</keyword>
<keyword id="KW-0694">RNA-binding</keyword>
<keyword id="KW-0543">Viral nucleoprotein</keyword>
<keyword id="KW-0946">Virion</keyword>
<dbReference type="EC" id="3.1.-.-" evidence="4"/>
<dbReference type="EMBL" id="X61035">
    <property type="protein sequence ID" value="CAA43370.1"/>
    <property type="molecule type" value="Genomic_RNA"/>
</dbReference>
<dbReference type="EMBL" id="HE801633">
    <property type="protein sequence ID" value="CCH22846.1"/>
    <property type="molecule type" value="Genomic_RNA"/>
</dbReference>
<dbReference type="PIR" id="JQ1605">
    <property type="entry name" value="JQ1605"/>
</dbReference>
<dbReference type="RefSeq" id="NP_941984.1">
    <property type="nucleotide sequence ID" value="NC_005224.1"/>
</dbReference>
<dbReference type="SMR" id="P27313"/>
<dbReference type="KEGG" id="vg:2943083"/>
<dbReference type="Proteomes" id="UP000008482">
    <property type="component" value="Genome"/>
</dbReference>
<dbReference type="Proteomes" id="UP000110237">
    <property type="component" value="Genome"/>
</dbReference>
<dbReference type="GO" id="GO:0019029">
    <property type="term" value="C:helical viral capsid"/>
    <property type="evidence" value="ECO:0007669"/>
    <property type="project" value="UniProtKB-KW"/>
</dbReference>
<dbReference type="GO" id="GO:0044177">
    <property type="term" value="C:host cell Golgi apparatus"/>
    <property type="evidence" value="ECO:0007669"/>
    <property type="project" value="UniProtKB-SubCell"/>
</dbReference>
<dbReference type="GO" id="GO:0044220">
    <property type="term" value="C:host cell perinuclear region of cytoplasm"/>
    <property type="evidence" value="ECO:0007669"/>
    <property type="project" value="UniProtKB-SubCell"/>
</dbReference>
<dbReference type="GO" id="GO:1990904">
    <property type="term" value="C:ribonucleoprotein complex"/>
    <property type="evidence" value="ECO:0007669"/>
    <property type="project" value="UniProtKB-KW"/>
</dbReference>
<dbReference type="GO" id="GO:0019013">
    <property type="term" value="C:viral nucleocapsid"/>
    <property type="evidence" value="ECO:0007669"/>
    <property type="project" value="UniProtKB-KW"/>
</dbReference>
<dbReference type="GO" id="GO:0004519">
    <property type="term" value="F:endonuclease activity"/>
    <property type="evidence" value="ECO:0007669"/>
    <property type="project" value="UniProtKB-KW"/>
</dbReference>
<dbReference type="GO" id="GO:0003723">
    <property type="term" value="F:RNA binding"/>
    <property type="evidence" value="ECO:0007669"/>
    <property type="project" value="UniProtKB-KW"/>
</dbReference>
<dbReference type="Gene3D" id="1.20.58.90">
    <property type="match status" value="1"/>
</dbReference>
<dbReference type="InterPro" id="IPR002214">
    <property type="entry name" value="Hanta_nucleocap"/>
</dbReference>
<dbReference type="Pfam" id="PF00846">
    <property type="entry name" value="Hanta_nucleocap"/>
    <property type="match status" value="1"/>
</dbReference>
<dbReference type="PIRSF" id="PIRSF003949">
    <property type="entry name" value="N_HantaV"/>
    <property type="match status" value="1"/>
</dbReference>
<name>NCAP_PUUMS</name>
<proteinExistence type="evidence at protein level"/>
<feature type="chain" id="PRO_0000222016" description="Nucleoprotein">
    <location>
        <begin position="1"/>
        <end position="433"/>
    </location>
</feature>
<feature type="region of interest" description="Viral panhandle binding" evidence="4">
    <location>
        <begin position="1"/>
        <end position="175"/>
    </location>
</feature>
<feature type="region of interest" description="Chaperone activity" evidence="4">
    <location>
        <begin position="1"/>
        <end position="100"/>
    </location>
</feature>
<feature type="region of interest" description="Homomultimerization" evidence="3">
    <location>
        <begin position="1"/>
        <end position="79"/>
    </location>
</feature>
<feature type="region of interest" description="RdRP binding" evidence="4">
    <location>
        <begin position="1"/>
        <end position="50"/>
    </location>
</feature>
<feature type="region of interest" description="Disordered" evidence="6">
    <location>
        <begin position="67"/>
        <end position="89"/>
    </location>
</feature>
<feature type="region of interest" description="Interaction with glycoprotein N" evidence="3">
    <location>
        <begin position="80"/>
        <end position="248"/>
    </location>
</feature>
<feature type="region of interest" description="Homomultimerization" evidence="2">
    <location>
        <begin position="100"/>
        <end position="125"/>
    </location>
</feature>
<feature type="region of interest" description="Interaction with host RPS19" evidence="4">
    <location>
        <begin position="150"/>
        <end position="175"/>
    </location>
</feature>
<feature type="region of interest" description="Viral RNA-binding" evidence="2">
    <location>
        <begin position="175"/>
        <end position="217"/>
    </location>
</feature>
<feature type="region of interest" description="Interaction with host UBE2I/UBC9" evidence="2">
    <location>
        <begin position="188"/>
        <end position="191"/>
    </location>
</feature>
<feature type="region of interest" description="Interaction with host DAXX" evidence="8">
    <location>
        <begin position="377"/>
        <end position="433"/>
    </location>
</feature>
<feature type="region of interest" description="Homomultimerization" evidence="3">
    <location>
        <begin position="377"/>
        <end position="425"/>
    </location>
</feature>
<feature type="coiled-coil region" evidence="5">
    <location>
        <begin position="4"/>
        <end position="71"/>
    </location>
</feature>
<feature type="short sequence motif" description="YxxL" evidence="2">
    <location>
        <begin position="178"/>
        <end position="181"/>
    </location>
</feature>
<feature type="compositionally biased region" description="Basic and acidic residues" evidence="6">
    <location>
        <begin position="67"/>
        <end position="78"/>
    </location>
</feature>
<feature type="site" description="Important for the endonuclease activity" evidence="4">
    <location>
        <position position="88"/>
    </location>
</feature>
<feature type="site" description="Important for the endonuclease activity" evidence="4">
    <location>
        <position position="103"/>
    </location>
</feature>